<evidence type="ECO:0000255" key="1">
    <source>
        <dbReference type="HAMAP-Rule" id="MF_01702"/>
    </source>
</evidence>
<organism>
    <name type="scientific">Bacteroides fragilis (strain ATCC 25285 / DSM 2151 / CCUG 4856 / JCM 11019 / LMG 10263 / NCTC 9343 / Onslow / VPI 2553 / EN-2)</name>
    <dbReference type="NCBI Taxonomy" id="272559"/>
    <lineage>
        <taxon>Bacteria</taxon>
        <taxon>Pseudomonadati</taxon>
        <taxon>Bacteroidota</taxon>
        <taxon>Bacteroidia</taxon>
        <taxon>Bacteroidales</taxon>
        <taxon>Bacteroidaceae</taxon>
        <taxon>Bacteroides</taxon>
    </lineage>
</organism>
<keyword id="KW-0067">ATP-binding</keyword>
<keyword id="KW-0997">Cell inner membrane</keyword>
<keyword id="KW-1003">Cell membrane</keyword>
<keyword id="KW-0472">Membrane</keyword>
<keyword id="KW-0547">Nucleotide-binding</keyword>
<keyword id="KW-0592">Phosphate transport</keyword>
<keyword id="KW-1278">Translocase</keyword>
<keyword id="KW-0813">Transport</keyword>
<protein>
    <recommendedName>
        <fullName evidence="1">Phosphate import ATP-binding protein PstB</fullName>
        <ecNumber evidence="1">7.3.2.1</ecNumber>
    </recommendedName>
    <alternativeName>
        <fullName evidence="1">ABC phosphate transporter</fullName>
    </alternativeName>
    <alternativeName>
        <fullName evidence="1">Phosphate-transporting ATPase</fullName>
    </alternativeName>
</protein>
<name>PSTB_BACFN</name>
<proteinExistence type="inferred from homology"/>
<comment type="function">
    <text evidence="1">Part of the ABC transporter complex PstSACB involved in phosphate import. Responsible for energy coupling to the transport system.</text>
</comment>
<comment type="catalytic activity">
    <reaction evidence="1">
        <text>phosphate(out) + ATP + H2O = ADP + 2 phosphate(in) + H(+)</text>
        <dbReference type="Rhea" id="RHEA:24440"/>
        <dbReference type="ChEBI" id="CHEBI:15377"/>
        <dbReference type="ChEBI" id="CHEBI:15378"/>
        <dbReference type="ChEBI" id="CHEBI:30616"/>
        <dbReference type="ChEBI" id="CHEBI:43474"/>
        <dbReference type="ChEBI" id="CHEBI:456216"/>
        <dbReference type="EC" id="7.3.2.1"/>
    </reaction>
</comment>
<comment type="subunit">
    <text evidence="1">The complex is composed of two ATP-binding proteins (PstB), two transmembrane proteins (PstC and PstA) and a solute-binding protein (PstS).</text>
</comment>
<comment type="subcellular location">
    <subcellularLocation>
        <location evidence="1">Cell inner membrane</location>
        <topology evidence="1">Peripheral membrane protein</topology>
    </subcellularLocation>
</comment>
<comment type="similarity">
    <text evidence="1">Belongs to the ABC transporter superfamily. Phosphate importer (TC 3.A.1.7) family.</text>
</comment>
<sequence length="253" mass="28469">MDTTVKIDARDVNFWYGDFHALKGISMEIEEKSVVAFIGPSGCGKSTFLRLFNRMNDLIPATRLTGEIRIDGENIYDKGVQVDELRKNVGMVFQRPNPFPKSIFENVAYGLRVNGVKDNAFIRQRVEETLKGAALWDEVKDKLKESAFALSGGQQQRLCIARAMAVSPSVLLMDEPASALDPISTAKVEELIHELKERYTIVIVTHNMQQAARVSDKTAFFYMGQMVEFGDTKKIFTNPEKEATQNYITGRFG</sequence>
<reference key="1">
    <citation type="journal article" date="2005" name="Science">
        <title>Extensive DNA inversions in the B. fragilis genome control variable gene expression.</title>
        <authorList>
            <person name="Cerdeno-Tarraga A.-M."/>
            <person name="Patrick S."/>
            <person name="Crossman L.C."/>
            <person name="Blakely G."/>
            <person name="Abratt V."/>
            <person name="Lennard N."/>
            <person name="Poxton I."/>
            <person name="Duerden B."/>
            <person name="Harris B."/>
            <person name="Quail M.A."/>
            <person name="Barron A."/>
            <person name="Clark L."/>
            <person name="Corton C."/>
            <person name="Doggett J."/>
            <person name="Holden M.T.G."/>
            <person name="Larke N."/>
            <person name="Line A."/>
            <person name="Lord A."/>
            <person name="Norbertczak H."/>
            <person name="Ormond D."/>
            <person name="Price C."/>
            <person name="Rabbinowitsch E."/>
            <person name="Woodward J."/>
            <person name="Barrell B.G."/>
            <person name="Parkhill J."/>
        </authorList>
    </citation>
    <scope>NUCLEOTIDE SEQUENCE [LARGE SCALE GENOMIC DNA]</scope>
    <source>
        <strain>ATCC 25285 / DSM 2151 / CCUG 4856 / JCM 11019 / LMG 10263 / NCTC 9343 / Onslow / VPI 2553 / EN-2</strain>
    </source>
</reference>
<feature type="chain" id="PRO_0000272425" description="Phosphate import ATP-binding protein PstB">
    <location>
        <begin position="1"/>
        <end position="253"/>
    </location>
</feature>
<feature type="domain" description="ABC transporter" evidence="1">
    <location>
        <begin position="7"/>
        <end position="248"/>
    </location>
</feature>
<feature type="binding site" evidence="1">
    <location>
        <begin position="39"/>
        <end position="46"/>
    </location>
    <ligand>
        <name>ATP</name>
        <dbReference type="ChEBI" id="CHEBI:30616"/>
    </ligand>
</feature>
<dbReference type="EC" id="7.3.2.1" evidence="1"/>
<dbReference type="EMBL" id="CR626927">
    <property type="protein sequence ID" value="CAH08464.1"/>
    <property type="molecule type" value="Genomic_DNA"/>
</dbReference>
<dbReference type="RefSeq" id="WP_005788575.1">
    <property type="nucleotide sequence ID" value="NZ_UFTH01000002.1"/>
</dbReference>
<dbReference type="SMR" id="Q5LBQ4"/>
<dbReference type="PaxDb" id="272559-BF9343_2683"/>
<dbReference type="GeneID" id="60367953"/>
<dbReference type="KEGG" id="bfs:BF9343_2683"/>
<dbReference type="eggNOG" id="COG1117">
    <property type="taxonomic scope" value="Bacteria"/>
</dbReference>
<dbReference type="HOGENOM" id="CLU_000604_1_22_10"/>
<dbReference type="Proteomes" id="UP000006731">
    <property type="component" value="Chromosome"/>
</dbReference>
<dbReference type="GO" id="GO:0005886">
    <property type="term" value="C:plasma membrane"/>
    <property type="evidence" value="ECO:0007669"/>
    <property type="project" value="UniProtKB-SubCell"/>
</dbReference>
<dbReference type="GO" id="GO:0005524">
    <property type="term" value="F:ATP binding"/>
    <property type="evidence" value="ECO:0007669"/>
    <property type="project" value="UniProtKB-KW"/>
</dbReference>
<dbReference type="GO" id="GO:0016887">
    <property type="term" value="F:ATP hydrolysis activity"/>
    <property type="evidence" value="ECO:0007669"/>
    <property type="project" value="InterPro"/>
</dbReference>
<dbReference type="GO" id="GO:0015415">
    <property type="term" value="F:ATPase-coupled phosphate ion transmembrane transporter activity"/>
    <property type="evidence" value="ECO:0007669"/>
    <property type="project" value="UniProtKB-EC"/>
</dbReference>
<dbReference type="GO" id="GO:0035435">
    <property type="term" value="P:phosphate ion transmembrane transport"/>
    <property type="evidence" value="ECO:0007669"/>
    <property type="project" value="InterPro"/>
</dbReference>
<dbReference type="CDD" id="cd03260">
    <property type="entry name" value="ABC_PstB_phosphate_transporter"/>
    <property type="match status" value="1"/>
</dbReference>
<dbReference type="FunFam" id="3.40.50.300:FF:000132">
    <property type="entry name" value="Phosphate import ATP-binding protein PstB"/>
    <property type="match status" value="1"/>
</dbReference>
<dbReference type="Gene3D" id="3.40.50.300">
    <property type="entry name" value="P-loop containing nucleotide triphosphate hydrolases"/>
    <property type="match status" value="1"/>
</dbReference>
<dbReference type="InterPro" id="IPR003593">
    <property type="entry name" value="AAA+_ATPase"/>
</dbReference>
<dbReference type="InterPro" id="IPR003439">
    <property type="entry name" value="ABC_transporter-like_ATP-bd"/>
</dbReference>
<dbReference type="InterPro" id="IPR017871">
    <property type="entry name" value="ABC_transporter-like_CS"/>
</dbReference>
<dbReference type="InterPro" id="IPR027417">
    <property type="entry name" value="P-loop_NTPase"/>
</dbReference>
<dbReference type="InterPro" id="IPR005670">
    <property type="entry name" value="PstB-like"/>
</dbReference>
<dbReference type="NCBIfam" id="TIGR00972">
    <property type="entry name" value="3a0107s01c2"/>
    <property type="match status" value="1"/>
</dbReference>
<dbReference type="PANTHER" id="PTHR43423">
    <property type="entry name" value="ABC TRANSPORTER I FAMILY MEMBER 17"/>
    <property type="match status" value="1"/>
</dbReference>
<dbReference type="PANTHER" id="PTHR43423:SF1">
    <property type="entry name" value="ABC TRANSPORTER I FAMILY MEMBER 17"/>
    <property type="match status" value="1"/>
</dbReference>
<dbReference type="Pfam" id="PF00005">
    <property type="entry name" value="ABC_tran"/>
    <property type="match status" value="1"/>
</dbReference>
<dbReference type="SMART" id="SM00382">
    <property type="entry name" value="AAA"/>
    <property type="match status" value="1"/>
</dbReference>
<dbReference type="SUPFAM" id="SSF52540">
    <property type="entry name" value="P-loop containing nucleoside triphosphate hydrolases"/>
    <property type="match status" value="1"/>
</dbReference>
<dbReference type="PROSITE" id="PS00211">
    <property type="entry name" value="ABC_TRANSPORTER_1"/>
    <property type="match status" value="1"/>
</dbReference>
<dbReference type="PROSITE" id="PS50893">
    <property type="entry name" value="ABC_TRANSPORTER_2"/>
    <property type="match status" value="1"/>
</dbReference>
<dbReference type="PROSITE" id="PS51238">
    <property type="entry name" value="PSTB"/>
    <property type="match status" value="1"/>
</dbReference>
<accession>Q5LBQ4</accession>
<gene>
    <name evidence="1" type="primary">pstB</name>
    <name type="ordered locus">BF2769</name>
</gene>